<dbReference type="EC" id="2.5.1.141" evidence="1"/>
<dbReference type="EMBL" id="CP000094">
    <property type="protein sequence ID" value="ABA71815.1"/>
    <property type="status" value="ALT_INIT"/>
    <property type="molecule type" value="Genomic_DNA"/>
</dbReference>
<dbReference type="RefSeq" id="WP_041475094.1">
    <property type="nucleotide sequence ID" value="NC_007492.2"/>
</dbReference>
<dbReference type="SMR" id="Q3KK91"/>
<dbReference type="KEGG" id="pfo:Pfl01_0071"/>
<dbReference type="eggNOG" id="COG0109">
    <property type="taxonomic scope" value="Bacteria"/>
</dbReference>
<dbReference type="HOGENOM" id="CLU_029631_0_2_6"/>
<dbReference type="UniPathway" id="UPA00834">
    <property type="reaction ID" value="UER00712"/>
</dbReference>
<dbReference type="Proteomes" id="UP000002704">
    <property type="component" value="Chromosome"/>
</dbReference>
<dbReference type="GO" id="GO:0005886">
    <property type="term" value="C:plasma membrane"/>
    <property type="evidence" value="ECO:0007669"/>
    <property type="project" value="UniProtKB-SubCell"/>
</dbReference>
<dbReference type="GO" id="GO:0008495">
    <property type="term" value="F:protoheme IX farnesyltransferase activity"/>
    <property type="evidence" value="ECO:0007669"/>
    <property type="project" value="UniProtKB-UniRule"/>
</dbReference>
<dbReference type="GO" id="GO:0048034">
    <property type="term" value="P:heme O biosynthetic process"/>
    <property type="evidence" value="ECO:0007669"/>
    <property type="project" value="UniProtKB-UniRule"/>
</dbReference>
<dbReference type="CDD" id="cd13957">
    <property type="entry name" value="PT_UbiA_Cox10"/>
    <property type="match status" value="1"/>
</dbReference>
<dbReference type="FunFam" id="1.10.357.140:FF:000001">
    <property type="entry name" value="Protoheme IX farnesyltransferase"/>
    <property type="match status" value="1"/>
</dbReference>
<dbReference type="Gene3D" id="1.10.357.140">
    <property type="entry name" value="UbiA prenyltransferase"/>
    <property type="match status" value="1"/>
</dbReference>
<dbReference type="HAMAP" id="MF_00154">
    <property type="entry name" value="CyoE_CtaB"/>
    <property type="match status" value="1"/>
</dbReference>
<dbReference type="InterPro" id="IPR006369">
    <property type="entry name" value="Protohaem_IX_farnesylTrfase"/>
</dbReference>
<dbReference type="InterPro" id="IPR000537">
    <property type="entry name" value="UbiA_prenyltransferase"/>
</dbReference>
<dbReference type="InterPro" id="IPR030470">
    <property type="entry name" value="UbiA_prenylTrfase_CS"/>
</dbReference>
<dbReference type="InterPro" id="IPR044878">
    <property type="entry name" value="UbiA_sf"/>
</dbReference>
<dbReference type="NCBIfam" id="TIGR01473">
    <property type="entry name" value="cyoE_ctaB"/>
    <property type="match status" value="1"/>
</dbReference>
<dbReference type="NCBIfam" id="NF003349">
    <property type="entry name" value="PRK04375.1-2"/>
    <property type="match status" value="1"/>
</dbReference>
<dbReference type="PANTHER" id="PTHR43448:SF7">
    <property type="entry name" value="4-HYDROXYBENZOATE SOLANESYLTRANSFERASE"/>
    <property type="match status" value="1"/>
</dbReference>
<dbReference type="PANTHER" id="PTHR43448">
    <property type="entry name" value="PROTOHEME IX FARNESYLTRANSFERASE, MITOCHONDRIAL"/>
    <property type="match status" value="1"/>
</dbReference>
<dbReference type="Pfam" id="PF01040">
    <property type="entry name" value="UbiA"/>
    <property type="match status" value="1"/>
</dbReference>
<dbReference type="PROSITE" id="PS00943">
    <property type="entry name" value="UBIA"/>
    <property type="match status" value="1"/>
</dbReference>
<accession>Q3KK91</accession>
<name>CYOE1_PSEPF</name>
<organism>
    <name type="scientific">Pseudomonas fluorescens (strain Pf0-1)</name>
    <dbReference type="NCBI Taxonomy" id="205922"/>
    <lineage>
        <taxon>Bacteria</taxon>
        <taxon>Pseudomonadati</taxon>
        <taxon>Pseudomonadota</taxon>
        <taxon>Gammaproteobacteria</taxon>
        <taxon>Pseudomonadales</taxon>
        <taxon>Pseudomonadaceae</taxon>
        <taxon>Pseudomonas</taxon>
    </lineage>
</organism>
<keyword id="KW-0997">Cell inner membrane</keyword>
<keyword id="KW-1003">Cell membrane</keyword>
<keyword id="KW-0350">Heme biosynthesis</keyword>
<keyword id="KW-0472">Membrane</keyword>
<keyword id="KW-0808">Transferase</keyword>
<keyword id="KW-0812">Transmembrane</keyword>
<keyword id="KW-1133">Transmembrane helix</keyword>
<feature type="chain" id="PRO_0000326925" description="Protoheme IX farnesyltransferase 1">
    <location>
        <begin position="1"/>
        <end position="299"/>
    </location>
</feature>
<feature type="transmembrane region" description="Helical" evidence="1">
    <location>
        <begin position="25"/>
        <end position="45"/>
    </location>
</feature>
<feature type="transmembrane region" description="Helical" evidence="1">
    <location>
        <begin position="47"/>
        <end position="67"/>
    </location>
</feature>
<feature type="transmembrane region" description="Helical" evidence="1">
    <location>
        <begin position="95"/>
        <end position="115"/>
    </location>
</feature>
<feature type="transmembrane region" description="Helical" evidence="1">
    <location>
        <begin position="119"/>
        <end position="139"/>
    </location>
</feature>
<feature type="transmembrane region" description="Helical" evidence="1">
    <location>
        <begin position="147"/>
        <end position="167"/>
    </location>
</feature>
<feature type="transmembrane region" description="Helical" evidence="1">
    <location>
        <begin position="173"/>
        <end position="193"/>
    </location>
</feature>
<feature type="transmembrane region" description="Helical" evidence="1">
    <location>
        <begin position="226"/>
        <end position="246"/>
    </location>
</feature>
<feature type="transmembrane region" description="Helical" evidence="1">
    <location>
        <begin position="279"/>
        <end position="299"/>
    </location>
</feature>
<sequence length="299" mass="32703">MAILIGERPAQALWRDYLELTKPKVVVLMLITSLVGMFLATRAGVPWTVLVFGNLGIALCAGGAAAVNHVVDRRIDAVMARTHKRPLADGRVSPTGALTFALVLALLGQALLLTFTNPLTAWLTLASLLGYAVIYTGFLKRATPQNIVIGGLAGAAPPLLGWTAATGHVSAEPLLLVLIIFAWTPPHFWALAIHRKEEYAKADIPMLPVTHGEHYTKVHILLYTFALLAVSLLPYVIHMSGLLYLICALGLGARFLQWAVVLYRGTRPHAAINTFKYSIWYLFLLFIALLVDHYLLLNL</sequence>
<gene>
    <name evidence="1" type="primary">cyoE1</name>
    <name type="ordered locus">Pfl01_0071</name>
</gene>
<evidence type="ECO:0000255" key="1">
    <source>
        <dbReference type="HAMAP-Rule" id="MF_00154"/>
    </source>
</evidence>
<evidence type="ECO:0000305" key="2"/>
<comment type="function">
    <text evidence="1">Converts heme B (protoheme IX) to heme O by substitution of the vinyl group on carbon 2 of heme B porphyrin ring with a hydroxyethyl farnesyl side group.</text>
</comment>
<comment type="catalytic activity">
    <reaction evidence="1">
        <text>heme b + (2E,6E)-farnesyl diphosphate + H2O = Fe(II)-heme o + diphosphate</text>
        <dbReference type="Rhea" id="RHEA:28070"/>
        <dbReference type="ChEBI" id="CHEBI:15377"/>
        <dbReference type="ChEBI" id="CHEBI:33019"/>
        <dbReference type="ChEBI" id="CHEBI:60344"/>
        <dbReference type="ChEBI" id="CHEBI:60530"/>
        <dbReference type="ChEBI" id="CHEBI:175763"/>
        <dbReference type="EC" id="2.5.1.141"/>
    </reaction>
</comment>
<comment type="pathway">
    <text evidence="1">Porphyrin-containing compound metabolism; heme O biosynthesis; heme O from protoheme: step 1/1.</text>
</comment>
<comment type="subcellular location">
    <subcellularLocation>
        <location evidence="1">Cell inner membrane</location>
        <topology evidence="1">Multi-pass membrane protein</topology>
    </subcellularLocation>
</comment>
<comment type="miscellaneous">
    <text evidence="1">Carbon 2 of the heme B porphyrin ring is defined according to the Fischer nomenclature.</text>
</comment>
<comment type="similarity">
    <text evidence="1">Belongs to the UbiA prenyltransferase family. Protoheme IX farnesyltransferase subfamily.</text>
</comment>
<comment type="sequence caution" evidence="2">
    <conflict type="erroneous initiation">
        <sequence resource="EMBL-CDS" id="ABA71815"/>
    </conflict>
</comment>
<proteinExistence type="inferred from homology"/>
<protein>
    <recommendedName>
        <fullName evidence="1">Protoheme IX farnesyltransferase 1</fullName>
        <ecNumber evidence="1">2.5.1.141</ecNumber>
    </recommendedName>
    <alternativeName>
        <fullName evidence="1">Heme B farnesyltransferase 1</fullName>
    </alternativeName>
    <alternativeName>
        <fullName evidence="1">Heme O synthase 1</fullName>
    </alternativeName>
</protein>
<reference key="1">
    <citation type="journal article" date="2009" name="Genome Biol.">
        <title>Genomic and genetic analyses of diversity and plant interactions of Pseudomonas fluorescens.</title>
        <authorList>
            <person name="Silby M.W."/>
            <person name="Cerdeno-Tarraga A.M."/>
            <person name="Vernikos G.S."/>
            <person name="Giddens S.R."/>
            <person name="Jackson R.W."/>
            <person name="Preston G.M."/>
            <person name="Zhang X.-X."/>
            <person name="Moon C.D."/>
            <person name="Gehrig S.M."/>
            <person name="Godfrey S.A.C."/>
            <person name="Knight C.G."/>
            <person name="Malone J.G."/>
            <person name="Robinson Z."/>
            <person name="Spiers A.J."/>
            <person name="Harris S."/>
            <person name="Challis G.L."/>
            <person name="Yaxley A.M."/>
            <person name="Harris D."/>
            <person name="Seeger K."/>
            <person name="Murphy L."/>
            <person name="Rutter S."/>
            <person name="Squares R."/>
            <person name="Quail M.A."/>
            <person name="Saunders E."/>
            <person name="Mavromatis K."/>
            <person name="Brettin T.S."/>
            <person name="Bentley S.D."/>
            <person name="Hothersall J."/>
            <person name="Stephens E."/>
            <person name="Thomas C.M."/>
            <person name="Parkhill J."/>
            <person name="Levy S.B."/>
            <person name="Rainey P.B."/>
            <person name="Thomson N.R."/>
        </authorList>
    </citation>
    <scope>NUCLEOTIDE SEQUENCE [LARGE SCALE GENOMIC DNA]</scope>
    <source>
        <strain>Pf0-1</strain>
    </source>
</reference>